<reference key="1">
    <citation type="journal article" date="2009" name="Genome Biol.">
        <title>Genomic and genetic analyses of diversity and plant interactions of Pseudomonas fluorescens.</title>
        <authorList>
            <person name="Silby M.W."/>
            <person name="Cerdeno-Tarraga A.M."/>
            <person name="Vernikos G.S."/>
            <person name="Giddens S.R."/>
            <person name="Jackson R.W."/>
            <person name="Preston G.M."/>
            <person name="Zhang X.-X."/>
            <person name="Moon C.D."/>
            <person name="Gehrig S.M."/>
            <person name="Godfrey S.A.C."/>
            <person name="Knight C.G."/>
            <person name="Malone J.G."/>
            <person name="Robinson Z."/>
            <person name="Spiers A.J."/>
            <person name="Harris S."/>
            <person name="Challis G.L."/>
            <person name="Yaxley A.M."/>
            <person name="Harris D."/>
            <person name="Seeger K."/>
            <person name="Murphy L."/>
            <person name="Rutter S."/>
            <person name="Squares R."/>
            <person name="Quail M.A."/>
            <person name="Saunders E."/>
            <person name="Mavromatis K."/>
            <person name="Brettin T.S."/>
            <person name="Bentley S.D."/>
            <person name="Hothersall J."/>
            <person name="Stephens E."/>
            <person name="Thomas C.M."/>
            <person name="Parkhill J."/>
            <person name="Levy S.B."/>
            <person name="Rainey P.B."/>
            <person name="Thomson N.R."/>
        </authorList>
    </citation>
    <scope>NUCLEOTIDE SEQUENCE [LARGE SCALE GENOMIC DNA]</scope>
    <source>
        <strain>Pf0-1</strain>
    </source>
</reference>
<name>TAL_PSEPF</name>
<gene>
    <name evidence="2" type="primary">tal</name>
    <name type="ordered locus">Pfl01_3847</name>
</gene>
<proteinExistence type="inferred from homology"/>
<organism>
    <name type="scientific">Pseudomonas fluorescens (strain Pf0-1)</name>
    <dbReference type="NCBI Taxonomy" id="205922"/>
    <lineage>
        <taxon>Bacteria</taxon>
        <taxon>Pseudomonadati</taxon>
        <taxon>Pseudomonadota</taxon>
        <taxon>Gammaproteobacteria</taxon>
        <taxon>Pseudomonadales</taxon>
        <taxon>Pseudomonadaceae</taxon>
        <taxon>Pseudomonas</taxon>
    </lineage>
</organism>
<feature type="chain" id="PRO_0000230962" description="Transaldolase">
    <location>
        <begin position="1"/>
        <end position="308"/>
    </location>
</feature>
<feature type="active site" description="Schiff-base intermediate with substrate" evidence="2">
    <location>
        <position position="125"/>
    </location>
</feature>
<sequence>MTSKLEQLKQFTTVVADTGDFEAIARVKPVDATTNPSLLLKAAAIPAYAELLNASVRDCKGDVGLASDRFGVAVGQEILKVIPGRISTEVDARLSFDQDAVLKRAHRLIELYDKAGVGRDRVLIKIASTWEGIRAAEILEKEGIQTNLTLLFSFAQAAACADAGVFLISPFVGRIYDWYKKANGNDYTGADDPGVQSVTRIYNYYKANDYKTVVMGASFRNLSQIEQLAGCDRLTISPDLIEKLAADTGKLERKLAPGHAGEARLSLNEAQFRWLSNEDAMATEKLAEGIRQFARDQEKLEALLQAKL</sequence>
<evidence type="ECO:0000250" key="1"/>
<evidence type="ECO:0000255" key="2">
    <source>
        <dbReference type="HAMAP-Rule" id="MF_00492"/>
    </source>
</evidence>
<dbReference type="EC" id="2.2.1.2" evidence="2"/>
<dbReference type="EMBL" id="CP000094">
    <property type="protein sequence ID" value="ABA75584.1"/>
    <property type="molecule type" value="Genomic_DNA"/>
</dbReference>
<dbReference type="RefSeq" id="WP_011335172.1">
    <property type="nucleotide sequence ID" value="NC_007492.2"/>
</dbReference>
<dbReference type="SMR" id="Q3K9H0"/>
<dbReference type="KEGG" id="pfo:Pfl01_3847"/>
<dbReference type="eggNOG" id="COG0176">
    <property type="taxonomic scope" value="Bacteria"/>
</dbReference>
<dbReference type="HOGENOM" id="CLU_047470_0_1_6"/>
<dbReference type="UniPathway" id="UPA00115">
    <property type="reaction ID" value="UER00414"/>
</dbReference>
<dbReference type="Proteomes" id="UP000002704">
    <property type="component" value="Chromosome"/>
</dbReference>
<dbReference type="GO" id="GO:0005829">
    <property type="term" value="C:cytosol"/>
    <property type="evidence" value="ECO:0007669"/>
    <property type="project" value="TreeGrafter"/>
</dbReference>
<dbReference type="GO" id="GO:0004801">
    <property type="term" value="F:transaldolase activity"/>
    <property type="evidence" value="ECO:0000250"/>
    <property type="project" value="UniProtKB"/>
</dbReference>
<dbReference type="GO" id="GO:0005975">
    <property type="term" value="P:carbohydrate metabolic process"/>
    <property type="evidence" value="ECO:0007669"/>
    <property type="project" value="InterPro"/>
</dbReference>
<dbReference type="GO" id="GO:0006098">
    <property type="term" value="P:pentose-phosphate shunt"/>
    <property type="evidence" value="ECO:0007669"/>
    <property type="project" value="UniProtKB-UniRule"/>
</dbReference>
<dbReference type="CDD" id="cd00957">
    <property type="entry name" value="Transaldolase_TalAB"/>
    <property type="match status" value="1"/>
</dbReference>
<dbReference type="FunFam" id="3.20.20.70:FF:000002">
    <property type="entry name" value="Transaldolase"/>
    <property type="match status" value="1"/>
</dbReference>
<dbReference type="Gene3D" id="3.20.20.70">
    <property type="entry name" value="Aldolase class I"/>
    <property type="match status" value="1"/>
</dbReference>
<dbReference type="HAMAP" id="MF_00492">
    <property type="entry name" value="Transaldolase_1"/>
    <property type="match status" value="1"/>
</dbReference>
<dbReference type="InterPro" id="IPR013785">
    <property type="entry name" value="Aldolase_TIM"/>
</dbReference>
<dbReference type="InterPro" id="IPR001585">
    <property type="entry name" value="TAL/FSA"/>
</dbReference>
<dbReference type="InterPro" id="IPR004730">
    <property type="entry name" value="Transaldolase_1"/>
</dbReference>
<dbReference type="InterPro" id="IPR018225">
    <property type="entry name" value="Transaldolase_AS"/>
</dbReference>
<dbReference type="NCBIfam" id="NF009001">
    <property type="entry name" value="PRK12346.1"/>
    <property type="match status" value="1"/>
</dbReference>
<dbReference type="NCBIfam" id="TIGR00874">
    <property type="entry name" value="talAB"/>
    <property type="match status" value="1"/>
</dbReference>
<dbReference type="PANTHER" id="PTHR10683">
    <property type="entry name" value="TRANSALDOLASE"/>
    <property type="match status" value="1"/>
</dbReference>
<dbReference type="PANTHER" id="PTHR10683:SF18">
    <property type="entry name" value="TRANSALDOLASE"/>
    <property type="match status" value="1"/>
</dbReference>
<dbReference type="Pfam" id="PF00923">
    <property type="entry name" value="TAL_FSA"/>
    <property type="match status" value="1"/>
</dbReference>
<dbReference type="SUPFAM" id="SSF51569">
    <property type="entry name" value="Aldolase"/>
    <property type="match status" value="1"/>
</dbReference>
<dbReference type="PROSITE" id="PS01054">
    <property type="entry name" value="TRANSALDOLASE_1"/>
    <property type="match status" value="1"/>
</dbReference>
<dbReference type="PROSITE" id="PS00958">
    <property type="entry name" value="TRANSALDOLASE_2"/>
    <property type="match status" value="1"/>
</dbReference>
<keyword id="KW-0963">Cytoplasm</keyword>
<keyword id="KW-0570">Pentose shunt</keyword>
<keyword id="KW-0704">Schiff base</keyword>
<keyword id="KW-0808">Transferase</keyword>
<comment type="function">
    <text evidence="2">Transaldolase is important for the balance of metabolites in the pentose-phosphate pathway.</text>
</comment>
<comment type="catalytic activity">
    <reaction evidence="2">
        <text>D-sedoheptulose 7-phosphate + D-glyceraldehyde 3-phosphate = D-erythrose 4-phosphate + beta-D-fructose 6-phosphate</text>
        <dbReference type="Rhea" id="RHEA:17053"/>
        <dbReference type="ChEBI" id="CHEBI:16897"/>
        <dbReference type="ChEBI" id="CHEBI:57483"/>
        <dbReference type="ChEBI" id="CHEBI:57634"/>
        <dbReference type="ChEBI" id="CHEBI:59776"/>
        <dbReference type="EC" id="2.2.1.2"/>
    </reaction>
</comment>
<comment type="pathway">
    <text evidence="2">Carbohydrate degradation; pentose phosphate pathway; D-glyceraldehyde 3-phosphate and beta-D-fructose 6-phosphate from D-ribose 5-phosphate and D-xylulose 5-phosphate (non-oxidative stage): step 2/3.</text>
</comment>
<comment type="subunit">
    <text evidence="1">Homodimer.</text>
</comment>
<comment type="subcellular location">
    <subcellularLocation>
        <location evidence="2">Cytoplasm</location>
    </subcellularLocation>
</comment>
<comment type="similarity">
    <text evidence="2">Belongs to the transaldolase family. Type 1 subfamily.</text>
</comment>
<protein>
    <recommendedName>
        <fullName evidence="2">Transaldolase</fullName>
        <ecNumber evidence="2">2.2.1.2</ecNumber>
    </recommendedName>
</protein>
<accession>Q3K9H0</accession>